<dbReference type="EMBL" id="CP000435">
    <property type="protein sequence ID" value="ABI45250.1"/>
    <property type="status" value="ALT_INIT"/>
    <property type="molecule type" value="Genomic_DNA"/>
</dbReference>
<dbReference type="RefSeq" id="WP_041426681.1">
    <property type="nucleotide sequence ID" value="NC_008319.1"/>
</dbReference>
<dbReference type="SMR" id="Q0I7X4"/>
<dbReference type="STRING" id="64471.sync_2250"/>
<dbReference type="KEGG" id="syg:sync_2250"/>
<dbReference type="eggNOG" id="COG2010">
    <property type="taxonomic scope" value="Bacteria"/>
</dbReference>
<dbReference type="HOGENOM" id="CLU_104149_1_0_3"/>
<dbReference type="Proteomes" id="UP000001961">
    <property type="component" value="Chromosome"/>
</dbReference>
<dbReference type="GO" id="GO:0009523">
    <property type="term" value="C:photosystem II"/>
    <property type="evidence" value="ECO:0007669"/>
    <property type="project" value="UniProtKB-KW"/>
</dbReference>
<dbReference type="GO" id="GO:0031676">
    <property type="term" value="C:plasma membrane-derived thylakoid membrane"/>
    <property type="evidence" value="ECO:0007669"/>
    <property type="project" value="UniProtKB-SubCell"/>
</dbReference>
<dbReference type="GO" id="GO:0009055">
    <property type="term" value="F:electron transfer activity"/>
    <property type="evidence" value="ECO:0007669"/>
    <property type="project" value="InterPro"/>
</dbReference>
<dbReference type="GO" id="GO:0020037">
    <property type="term" value="F:heme binding"/>
    <property type="evidence" value="ECO:0007669"/>
    <property type="project" value="InterPro"/>
</dbReference>
<dbReference type="GO" id="GO:0005506">
    <property type="term" value="F:iron ion binding"/>
    <property type="evidence" value="ECO:0007669"/>
    <property type="project" value="InterPro"/>
</dbReference>
<dbReference type="GO" id="GO:0019684">
    <property type="term" value="P:photosynthesis, light reaction"/>
    <property type="evidence" value="ECO:0007669"/>
    <property type="project" value="UniProtKB-UniRule"/>
</dbReference>
<dbReference type="GO" id="GO:0022904">
    <property type="term" value="P:respiratory electron transport chain"/>
    <property type="evidence" value="ECO:0007669"/>
    <property type="project" value="InterPro"/>
</dbReference>
<dbReference type="Gene3D" id="1.10.760.10">
    <property type="entry name" value="Cytochrome c-like domain"/>
    <property type="match status" value="1"/>
</dbReference>
<dbReference type="HAMAP" id="MF_01378">
    <property type="entry name" value="PSII_Cyt550"/>
    <property type="match status" value="1"/>
</dbReference>
<dbReference type="InterPro" id="IPR009056">
    <property type="entry name" value="Cyt_c-like_dom"/>
</dbReference>
<dbReference type="InterPro" id="IPR036909">
    <property type="entry name" value="Cyt_c-like_dom_sf"/>
</dbReference>
<dbReference type="InterPro" id="IPR029490">
    <property type="entry name" value="Cytochrom_C550"/>
</dbReference>
<dbReference type="InterPro" id="IPR017851">
    <property type="entry name" value="PsbV_cyt_c550"/>
</dbReference>
<dbReference type="InterPro" id="IPR016003">
    <property type="entry name" value="PsbV_cyt_c550-like"/>
</dbReference>
<dbReference type="NCBIfam" id="TIGR03045">
    <property type="entry name" value="PS_II_C550"/>
    <property type="match status" value="1"/>
</dbReference>
<dbReference type="Pfam" id="PF14495">
    <property type="entry name" value="Cytochrom_C550"/>
    <property type="match status" value="1"/>
</dbReference>
<dbReference type="PIRSF" id="PIRSF005890">
    <property type="entry name" value="Phot_II_cyt_c550"/>
    <property type="match status" value="1"/>
</dbReference>
<dbReference type="SUPFAM" id="SSF46626">
    <property type="entry name" value="Cytochrome c"/>
    <property type="match status" value="1"/>
</dbReference>
<dbReference type="PROSITE" id="PS51007">
    <property type="entry name" value="CYTC"/>
    <property type="match status" value="1"/>
</dbReference>
<organism>
    <name type="scientific">Synechococcus sp. (strain CC9311)</name>
    <dbReference type="NCBI Taxonomy" id="64471"/>
    <lineage>
        <taxon>Bacteria</taxon>
        <taxon>Bacillati</taxon>
        <taxon>Cyanobacteriota</taxon>
        <taxon>Cyanophyceae</taxon>
        <taxon>Synechococcales</taxon>
        <taxon>Synechococcaceae</taxon>
        <taxon>Synechococcus</taxon>
    </lineage>
</organism>
<name>CY550_SYNS3</name>
<proteinExistence type="inferred from homology"/>
<comment type="function">
    <text evidence="1">One of the extrinsic, lumenal subunits of photosystem II (PSII). PSII is a light-driven water plastoquinone oxidoreductase, using light energy to abstract electrons from H(2)O, generating a proton gradient subsequently used for ATP formation. The extrinsic proteins stabilize the structure of photosystem II oxygen-evolving complex (OEC), the ion environment of oxygen evolution and protect the OEC against heat-induced inactivation. Low-potential cytochrome c that plays a role in the OEC of PSII.</text>
</comment>
<comment type="cofactor">
    <cofactor evidence="1">
        <name>heme c</name>
        <dbReference type="ChEBI" id="CHEBI:61717"/>
    </cofactor>
    <text evidence="1">Binds 1 heme c group covalently per subunit.</text>
</comment>
<comment type="subunit">
    <text evidence="1">PSII is composed of 1 copy each of membrane proteins PsbA, PsbB, PsbC, PsbD, PsbE, PsbF, PsbH, PsbI, PsbJ, PsbK, PsbL, PsbM, PsbT, PsbX, PsbY, PsbZ, Psb30/Ycf12, peripheral proteins PsbO, CyanoQ (PsbQ), PsbU, PsbV and a large number of cofactors. It forms dimeric complexes.</text>
</comment>
<comment type="subcellular location">
    <subcellularLocation>
        <location evidence="1">Cellular thylakoid membrane</location>
        <topology evidence="1">Peripheral membrane protein</topology>
        <orientation evidence="1">Lumenal side</orientation>
    </subcellularLocation>
    <text evidence="1">Associated with photosystem II at the lumenal side of the thylakoid membrane.</text>
</comment>
<comment type="similarity">
    <text evidence="1">Belongs to the cytochrome c family. PsbV subfamily.</text>
</comment>
<comment type="sequence caution" evidence="2">
    <conflict type="erroneous initiation">
        <sequence resource="EMBL-CDS" id="ABI45250"/>
    </conflict>
    <text>Extended N-terminus.</text>
</comment>
<sequence length="170" mass="18431">MASFFSTLRRSLNRLLIALPVLLGLMISTPAQAAQWDAETLTVPADGDGALVTFSEQEIKTGRKVFNVSCGTCHAGGITKTNQNVGLDTETLALATPARDNVASLVDYLQDPTSYDGEYSIADLHPSMRSRDLYPAMRDLTDEDLRLMSGYILVAPKVLGVDWGGGKIYF</sequence>
<protein>
    <recommendedName>
        <fullName evidence="1">Photosystem II extrinsic protein V</fullName>
        <shortName evidence="1">PsbV</shortName>
    </recommendedName>
    <alternativeName>
        <fullName evidence="1">Cytochrome c-550</fullName>
    </alternativeName>
    <alternativeName>
        <fullName evidence="1">Cytochrome c550</fullName>
    </alternativeName>
    <alternativeName>
        <fullName evidence="1">Low-potential cytochrome c</fullName>
    </alternativeName>
</protein>
<evidence type="ECO:0000255" key="1">
    <source>
        <dbReference type="HAMAP-Rule" id="MF_01378"/>
    </source>
</evidence>
<evidence type="ECO:0000305" key="2"/>
<reference key="1">
    <citation type="journal article" date="2006" name="Proc. Natl. Acad. Sci. U.S.A.">
        <title>Genome sequence of Synechococcus CC9311: insights into adaptation to a coastal environment.</title>
        <authorList>
            <person name="Palenik B."/>
            <person name="Ren Q."/>
            <person name="Dupont C.L."/>
            <person name="Myers G.S."/>
            <person name="Heidelberg J.F."/>
            <person name="Badger J.H."/>
            <person name="Madupu R."/>
            <person name="Nelson W.C."/>
            <person name="Brinkac L.M."/>
            <person name="Dodson R.J."/>
            <person name="Durkin A.S."/>
            <person name="Daugherty S.C."/>
            <person name="Sullivan S.A."/>
            <person name="Khouri H."/>
            <person name="Mohamoud Y."/>
            <person name="Halpin R."/>
            <person name="Paulsen I.T."/>
        </authorList>
    </citation>
    <scope>NUCLEOTIDE SEQUENCE [LARGE SCALE GENOMIC DNA]</scope>
    <source>
        <strain>CC9311</strain>
    </source>
</reference>
<accession>Q0I7X4</accession>
<feature type="signal peptide" evidence="1">
    <location>
        <begin position="1"/>
        <end position="33"/>
    </location>
</feature>
<feature type="chain" id="PRO_0000295602" description="Photosystem II extrinsic protein V">
    <location>
        <begin position="34"/>
        <end position="170"/>
    </location>
</feature>
<feature type="binding site" description="covalent" evidence="1">
    <location>
        <position position="70"/>
    </location>
    <ligand>
        <name>heme c</name>
        <dbReference type="ChEBI" id="CHEBI:61717"/>
    </ligand>
</feature>
<feature type="binding site" description="covalent" evidence="1">
    <location>
        <position position="73"/>
    </location>
    <ligand>
        <name>heme c</name>
        <dbReference type="ChEBI" id="CHEBI:61717"/>
    </ligand>
</feature>
<feature type="binding site" description="axial binding residue" evidence="1">
    <location>
        <position position="74"/>
    </location>
    <ligand>
        <name>heme c</name>
        <dbReference type="ChEBI" id="CHEBI:61717"/>
    </ligand>
    <ligandPart>
        <name>Fe</name>
        <dbReference type="ChEBI" id="CHEBI:18248"/>
    </ligandPart>
</feature>
<feature type="binding site" description="axial binding residue" evidence="1">
    <location>
        <position position="125"/>
    </location>
    <ligand>
        <name>heme c</name>
        <dbReference type="ChEBI" id="CHEBI:61717"/>
    </ligand>
    <ligandPart>
        <name>Fe</name>
        <dbReference type="ChEBI" id="CHEBI:18248"/>
    </ligandPart>
</feature>
<keyword id="KW-0249">Electron transport</keyword>
<keyword id="KW-0349">Heme</keyword>
<keyword id="KW-0408">Iron</keyword>
<keyword id="KW-0472">Membrane</keyword>
<keyword id="KW-0479">Metal-binding</keyword>
<keyword id="KW-0602">Photosynthesis</keyword>
<keyword id="KW-0604">Photosystem II</keyword>
<keyword id="KW-1185">Reference proteome</keyword>
<keyword id="KW-0732">Signal</keyword>
<keyword id="KW-0793">Thylakoid</keyword>
<keyword id="KW-0813">Transport</keyword>
<gene>
    <name evidence="1" type="primary">psbV</name>
    <name type="ordered locus">sync_2250</name>
</gene>